<evidence type="ECO:0000250" key="1"/>
<evidence type="ECO:0000250" key="2">
    <source>
        <dbReference type="UniProtKB" id="P27699"/>
    </source>
</evidence>
<evidence type="ECO:0000250" key="3">
    <source>
        <dbReference type="UniProtKB" id="Q01147"/>
    </source>
</evidence>
<evidence type="ECO:0000250" key="4">
    <source>
        <dbReference type="UniProtKB" id="Q03060"/>
    </source>
</evidence>
<evidence type="ECO:0000255" key="5">
    <source>
        <dbReference type="PROSITE-ProRule" id="PRU00312"/>
    </source>
</evidence>
<evidence type="ECO:0000255" key="6">
    <source>
        <dbReference type="PROSITE-ProRule" id="PRU00978"/>
    </source>
</evidence>
<evidence type="ECO:0000269" key="7">
    <source>
    </source>
</evidence>
<evidence type="ECO:0000269" key="8">
    <source>
    </source>
</evidence>
<evidence type="ECO:0000303" key="9">
    <source>
    </source>
</evidence>
<evidence type="ECO:0000303" key="10">
    <source>
    </source>
</evidence>
<evidence type="ECO:0000305" key="11"/>
<reference key="1">
    <citation type="journal article" date="2004" name="Genome Res.">
        <title>The status, quality, and expansion of the NIH full-length cDNA project: the Mammalian Gene Collection (MGC).</title>
        <authorList>
            <consortium name="The MGC Project Team"/>
        </authorList>
    </citation>
    <scope>NUCLEOTIDE SEQUENCE [LARGE SCALE MRNA] (ISOFORM 7)</scope>
    <source>
        <strain>Brown Norway</strain>
        <tissue>Testis</tissue>
    </source>
</reference>
<reference key="2">
    <citation type="journal article" date="1992" name="Nucleic Acids Res.">
        <title>Cyclic AMP response element binding protein CREB and modulator protein CREM are products of distinct genes.</title>
        <authorList>
            <person name="Meyer T.E."/>
            <person name="Habener J.F."/>
        </authorList>
    </citation>
    <scope>NUCLEOTIDE SEQUENCE [MRNA] OF 17-357 (ISOFORM TAU)</scope>
    <source>
        <tissue>Testis</tissue>
    </source>
</reference>
<reference key="3">
    <citation type="journal article" date="2000" name="Endocrinology">
        <title>Novel cyclic adenosine 3',5'-monophosphate (cAMP) response element modulator theta isoforms expressed by two newly identified cAMP-responsive promoters active in the testis.</title>
        <authorList>
            <person name="Daniel P.B."/>
            <person name="Rohrbach L."/>
            <person name="Habener J.F."/>
        </authorList>
    </citation>
    <scope>NUCLEOTIDE SEQUENCE [MRNA] OF 1-68 (ISOFORM 5)</scope>
    <scope>NUCLEOTIDE SEQUENCE [MRNA] OF 1-62 (ISOFORM 6)</scope>
    <scope>TISSUE SPECIFICITY</scope>
</reference>
<reference key="4">
    <citation type="journal article" date="1994" name="Biol. Reprod.">
        <title>Differential regulation of cyclic adenosine 3',5'-monophosphate (cAMP) response element-binding protein and cAMP response element modulator messenger ribonucleic acid transcripts by follicle-stimulating hormone and androgen in the adult rat testis.</title>
        <authorList>
            <person name="West A.P."/>
            <person name="Sharpe R.M."/>
            <person name="Saunders P.T."/>
        </authorList>
    </citation>
    <scope>TISSUE SPECIFICITY</scope>
    <scope>ALTERNATIVE SPLICING</scope>
</reference>
<reference key="5">
    <citation type="journal article" date="2012" name="Nat. Commun.">
        <title>Quantitative maps of protein phosphorylation sites across 14 different rat organs and tissues.</title>
        <authorList>
            <person name="Lundby A."/>
            <person name="Secher A."/>
            <person name="Lage K."/>
            <person name="Nordsborg N.B."/>
            <person name="Dmytriyev A."/>
            <person name="Lundby C."/>
            <person name="Olsen J.V."/>
        </authorList>
    </citation>
    <scope>IDENTIFICATION BY MASS SPECTROMETRY [LARGE SCALE ANALYSIS]</scope>
</reference>
<comment type="function">
    <text evidence="1">Transcriptional regulator that binds the cAMP response element (CRE), a sequence present in many viral and cellular promoters. Isoforms are either transcriptional activators or repressors. Isoform Delta is an activator. Plays a role in spermatogenesis and is involved in spermatid maturation. Binding of isoform Tau (activator) to CRE is increased by CREB3L4. The CREM isoform Tau-CREB3L4 heterodimer functions through CRE and may recruit HIRA to CRE to regulate histone exchange (By similarity).</text>
</comment>
<comment type="subunit">
    <text evidence="2 4">Binds DNA as a dimer. Interacts with CDC34. Interacts with FHL5. Isoform delta forms a heterodimer with CREB3L4. May interact with TSSK4.</text>
</comment>
<comment type="subcellular location">
    <subcellularLocation>
        <location>Nucleus</location>
    </subcellularLocation>
</comment>
<comment type="alternative products">
    <event type="alternative promoter"/>
    <event type="alternative splicing"/>
    <isoform>
        <id>Q03061-7</id>
        <name>7</name>
        <sequence type="displayed"/>
    </isoform>
    <isoform>
        <id>Q03061-1</id>
        <name>Tau</name>
        <name>CREM-BCEFGgammaHIbeta</name>
        <sequence type="described" ref="VSP_038017"/>
    </isoform>
    <isoform>
        <id>Q03061-2</id>
        <name>Alpha</name>
        <sequence type="not described"/>
    </isoform>
    <isoform>
        <id>Q03061-3</id>
        <name>Beta</name>
        <sequence type="not described"/>
    </isoform>
    <isoform>
        <id>Q03061-4</id>
        <name>Gamma</name>
        <sequence type="not described"/>
    </isoform>
    <isoform>
        <id>Q03061-5</id>
        <name>5</name>
        <name>CREM-theta1CEFGgammaHIbeta</name>
        <sequence type="described" ref="VSP_026079"/>
    </isoform>
    <isoform>
        <id>Q03061-6</id>
        <name>6</name>
        <name>CREM-theta2CEFGgammaHIbeta</name>
        <sequence type="described" ref="VSP_026080"/>
    </isoform>
</comment>
<comment type="tissue specificity">
    <text evidence="7 8">Isoform Tau is expressed in testis germ cells. CREM-theta1- and CREM-theta2-containing isoforms are expressed in testis.</text>
</comment>
<comment type="PTM">
    <text evidence="2 3">Stimulated by phosphorylation. Phosphorylated on Ser-116 by TSSK4 in vitro.</text>
</comment>
<comment type="PTM">
    <text evidence="1">Ubiquitinated by CDC34 and RAD6B in order to be degraded by the proteasome.</text>
</comment>
<comment type="miscellaneous">
    <molecule>Isoform 7</molecule>
    <text>Produced by alternative splicing.</text>
</comment>
<comment type="miscellaneous">
    <molecule>Isoform Tau</molecule>
    <text evidence="11">Produced by alternative promoter usage. Activator.</text>
</comment>
<comment type="miscellaneous">
    <molecule>Isoform 5</molecule>
    <text evidence="11">Produced by alternative promoter usage. Activator.</text>
</comment>
<comment type="miscellaneous">
    <molecule>Isoform 6</molecule>
    <text evidence="11">Produced by alternative promoter usage. Activator.</text>
</comment>
<comment type="similarity">
    <text evidence="11">Belongs to the bZIP family.</text>
</comment>
<organism>
    <name type="scientific">Rattus norvegicus</name>
    <name type="common">Rat</name>
    <dbReference type="NCBI Taxonomy" id="10116"/>
    <lineage>
        <taxon>Eukaryota</taxon>
        <taxon>Metazoa</taxon>
        <taxon>Chordata</taxon>
        <taxon>Craniata</taxon>
        <taxon>Vertebrata</taxon>
        <taxon>Euteleostomi</taxon>
        <taxon>Mammalia</taxon>
        <taxon>Eutheria</taxon>
        <taxon>Euarchontoglires</taxon>
        <taxon>Glires</taxon>
        <taxon>Rodentia</taxon>
        <taxon>Myomorpha</taxon>
        <taxon>Muroidea</taxon>
        <taxon>Muridae</taxon>
        <taxon>Murinae</taxon>
        <taxon>Rattus</taxon>
    </lineage>
</organism>
<sequence>MSKCGRKKYMRTNVRQMTMETVESQQDRSVTHSVAEHSSAHMQTGQISVPTLAQVSVAGSGTGRGSPAVTLVQLPSGQTVQVQGVIQTPHPSVIQSPQIQTVQVATIAETDDSADSEVIDSHKRREILSRRPSYRKILNELSSDVPGIPKIEEEKSEEEGTPPNIATMAVPTSIYQTSTGQYIAIAQGGTIQISNPGSDGVQGLQALTMTNSGAPPPGATIVQYAAQSADGTQQFFVPGSQVVVQDEETDLAPSHMAAATGDMPTYQIRAPTTALPQGVVMAASPGSLHSPQQLAEEATRKRELRLMKNREAAKECRRRKKEYVKCLESRVAVLEVQNKKLIEELETLKDICSPKTD</sequence>
<dbReference type="EMBL" id="BC078899">
    <property type="protein sequence ID" value="AAH78899.1"/>
    <property type="molecule type" value="mRNA"/>
</dbReference>
<dbReference type="EMBL" id="Z15158">
    <property type="protein sequence ID" value="CAA78857.1"/>
    <property type="molecule type" value="mRNA"/>
</dbReference>
<dbReference type="PIR" id="S26686">
    <property type="entry name" value="S26686"/>
</dbReference>
<dbReference type="RefSeq" id="NP_001104330.1">
    <property type="nucleotide sequence ID" value="NM_001110860.2"/>
</dbReference>
<dbReference type="RefSeq" id="NP_001258030.1">
    <molecule id="Q03061-7"/>
    <property type="nucleotide sequence ID" value="NM_001271101.1"/>
</dbReference>
<dbReference type="RefSeq" id="XP_063132154.1">
    <molecule id="Q03061-5"/>
    <property type="nucleotide sequence ID" value="XM_063276084.1"/>
</dbReference>
<dbReference type="RefSeq" id="XP_063132157.1">
    <molecule id="Q03061-6"/>
    <property type="nucleotide sequence ID" value="XM_063276087.1"/>
</dbReference>
<dbReference type="SMR" id="Q03061"/>
<dbReference type="BioGRID" id="247649">
    <property type="interactions" value="5"/>
</dbReference>
<dbReference type="FunCoup" id="Q03061">
    <property type="interactions" value="2235"/>
</dbReference>
<dbReference type="STRING" id="10116.ENSRNOP00000062109"/>
<dbReference type="PhosphoSitePlus" id="Q03061"/>
<dbReference type="PaxDb" id="10116-ENSRNOP00000062109"/>
<dbReference type="Ensembl" id="ENSRNOT00000089536.2">
    <molecule id="Q03061-5"/>
    <property type="protein sequence ID" value="ENSRNOP00000074062.2"/>
    <property type="gene ID" value="ENSRNOG00000014900.9"/>
</dbReference>
<dbReference type="Ensembl" id="ENSRNOT00000111611.1">
    <molecule id="Q03061-6"/>
    <property type="protein sequence ID" value="ENSRNOP00000083222.1"/>
    <property type="gene ID" value="ENSRNOG00000014900.9"/>
</dbReference>
<dbReference type="GeneID" id="25620"/>
<dbReference type="KEGG" id="rno:25620"/>
<dbReference type="UCSC" id="RGD:2402">
    <molecule id="Q03061-7"/>
    <property type="organism name" value="rat"/>
</dbReference>
<dbReference type="AGR" id="RGD:2402"/>
<dbReference type="CTD" id="1390"/>
<dbReference type="RGD" id="2402">
    <property type="gene designation" value="Crem"/>
</dbReference>
<dbReference type="VEuPathDB" id="HostDB:ENSRNOG00000014900"/>
<dbReference type="eggNOG" id="KOG3584">
    <property type="taxonomic scope" value="Eukaryota"/>
</dbReference>
<dbReference type="GeneTree" id="ENSGT00940000156952"/>
<dbReference type="InParanoid" id="Q03061"/>
<dbReference type="OrthoDB" id="5970722at2759"/>
<dbReference type="PhylomeDB" id="Q03061"/>
<dbReference type="PRO" id="PR:Q03061"/>
<dbReference type="Proteomes" id="UP000002494">
    <property type="component" value="Chromosome 17"/>
</dbReference>
<dbReference type="Bgee" id="ENSRNOG00000014900">
    <property type="expression patterns" value="Expressed in testis and 19 other cell types or tissues"/>
</dbReference>
<dbReference type="ExpressionAtlas" id="Q03061">
    <property type="expression patterns" value="baseline and differential"/>
</dbReference>
<dbReference type="GO" id="GO:1990589">
    <property type="term" value="C:ATF4-CREB1 transcription factor complex"/>
    <property type="evidence" value="ECO:0000318"/>
    <property type="project" value="GO_Central"/>
</dbReference>
<dbReference type="GO" id="GO:0016020">
    <property type="term" value="C:membrane"/>
    <property type="evidence" value="ECO:0007669"/>
    <property type="project" value="GOC"/>
</dbReference>
<dbReference type="GO" id="GO:0005634">
    <property type="term" value="C:nucleus"/>
    <property type="evidence" value="ECO:0000266"/>
    <property type="project" value="RGD"/>
</dbReference>
<dbReference type="GO" id="GO:0005667">
    <property type="term" value="C:transcription regulator complex"/>
    <property type="evidence" value="ECO:0000266"/>
    <property type="project" value="RGD"/>
</dbReference>
<dbReference type="GO" id="GO:0003677">
    <property type="term" value="F:DNA binding"/>
    <property type="evidence" value="ECO:0000266"/>
    <property type="project" value="RGD"/>
</dbReference>
<dbReference type="GO" id="GO:0000981">
    <property type="term" value="F:DNA-binding transcription factor activity, RNA polymerase II-specific"/>
    <property type="evidence" value="ECO:0000318"/>
    <property type="project" value="GO_Central"/>
</dbReference>
<dbReference type="GO" id="GO:0001227">
    <property type="term" value="F:DNA-binding transcription repressor activity, RNA polymerase II-specific"/>
    <property type="evidence" value="ECO:0000266"/>
    <property type="project" value="RGD"/>
</dbReference>
<dbReference type="GO" id="GO:0000978">
    <property type="term" value="F:RNA polymerase II cis-regulatory region sequence-specific DNA binding"/>
    <property type="evidence" value="ECO:0000318"/>
    <property type="project" value="GO_Central"/>
</dbReference>
<dbReference type="GO" id="GO:0000977">
    <property type="term" value="F:RNA polymerase II transcription regulatory region sequence-specific DNA binding"/>
    <property type="evidence" value="ECO:0000266"/>
    <property type="project" value="RGD"/>
</dbReference>
<dbReference type="GO" id="GO:1990837">
    <property type="term" value="F:sequence-specific double-stranded DNA binding"/>
    <property type="evidence" value="ECO:0000266"/>
    <property type="project" value="RGD"/>
</dbReference>
<dbReference type="GO" id="GO:0019933">
    <property type="term" value="P:cAMP-mediated signaling"/>
    <property type="evidence" value="ECO:0000304"/>
    <property type="project" value="RGD"/>
</dbReference>
<dbReference type="GO" id="GO:0006631">
    <property type="term" value="P:fatty acid metabolic process"/>
    <property type="evidence" value="ECO:0000270"/>
    <property type="project" value="RGD"/>
</dbReference>
<dbReference type="GO" id="GO:0006006">
    <property type="term" value="P:glucose metabolic process"/>
    <property type="evidence" value="ECO:0000270"/>
    <property type="project" value="RGD"/>
</dbReference>
<dbReference type="GO" id="GO:0006687">
    <property type="term" value="P:glycosphingolipid metabolic process"/>
    <property type="evidence" value="ECO:0000266"/>
    <property type="project" value="RGD"/>
</dbReference>
<dbReference type="GO" id="GO:0000122">
    <property type="term" value="P:negative regulation of transcription by RNA polymerase II"/>
    <property type="evidence" value="ECO:0000266"/>
    <property type="project" value="RGD"/>
</dbReference>
<dbReference type="GO" id="GO:0045944">
    <property type="term" value="P:positive regulation of transcription by RNA polymerase II"/>
    <property type="evidence" value="ECO:0000266"/>
    <property type="project" value="RGD"/>
</dbReference>
<dbReference type="GO" id="GO:0006355">
    <property type="term" value="P:regulation of DNA-templated transcription"/>
    <property type="evidence" value="ECO:0000266"/>
    <property type="project" value="RGD"/>
</dbReference>
<dbReference type="GO" id="GO:0006357">
    <property type="term" value="P:regulation of transcription by RNA polymerase II"/>
    <property type="evidence" value="ECO:0000318"/>
    <property type="project" value="GO_Central"/>
</dbReference>
<dbReference type="GO" id="GO:0048384">
    <property type="term" value="P:retinoic acid receptor signaling pathway"/>
    <property type="evidence" value="ECO:0000270"/>
    <property type="project" value="RGD"/>
</dbReference>
<dbReference type="GO" id="GO:0007283">
    <property type="term" value="P:spermatogenesis"/>
    <property type="evidence" value="ECO:0000266"/>
    <property type="project" value="RGD"/>
</dbReference>
<dbReference type="CDD" id="cd14690">
    <property type="entry name" value="bZIP_CREB1"/>
    <property type="match status" value="1"/>
</dbReference>
<dbReference type="FunFam" id="1.20.5.170:FF:000003">
    <property type="entry name" value="cAMP-responsive element modulator isoform X2"/>
    <property type="match status" value="1"/>
</dbReference>
<dbReference type="Gene3D" id="1.20.5.170">
    <property type="match status" value="1"/>
</dbReference>
<dbReference type="InterPro" id="IPR004827">
    <property type="entry name" value="bZIP"/>
</dbReference>
<dbReference type="InterPro" id="IPR046347">
    <property type="entry name" value="bZIP_sf"/>
</dbReference>
<dbReference type="InterPro" id="IPR003102">
    <property type="entry name" value="CREB1-like_pKID"/>
</dbReference>
<dbReference type="InterPro" id="IPR001630">
    <property type="entry name" value="Leuzip_CREB"/>
</dbReference>
<dbReference type="PANTHER" id="PTHR45879:SF4">
    <property type="entry name" value="CAMP-RESPONSIVE ELEMENT MODULATOR"/>
    <property type="match status" value="1"/>
</dbReference>
<dbReference type="PANTHER" id="PTHR45879">
    <property type="entry name" value="CYCLIC AMP RESPONSE ELEMENT-BINDING PROTEIN B"/>
    <property type="match status" value="1"/>
</dbReference>
<dbReference type="Pfam" id="PF00170">
    <property type="entry name" value="bZIP_1"/>
    <property type="match status" value="1"/>
</dbReference>
<dbReference type="Pfam" id="PF02173">
    <property type="entry name" value="pKID"/>
    <property type="match status" value="1"/>
</dbReference>
<dbReference type="PRINTS" id="PR00041">
    <property type="entry name" value="LEUZIPPRCREB"/>
</dbReference>
<dbReference type="SMART" id="SM00338">
    <property type="entry name" value="BRLZ"/>
    <property type="match status" value="1"/>
</dbReference>
<dbReference type="SUPFAM" id="SSF57959">
    <property type="entry name" value="Leucine zipper domain"/>
    <property type="match status" value="1"/>
</dbReference>
<dbReference type="PROSITE" id="PS50217">
    <property type="entry name" value="BZIP"/>
    <property type="match status" value="1"/>
</dbReference>
<dbReference type="PROSITE" id="PS00036">
    <property type="entry name" value="BZIP_BASIC"/>
    <property type="match status" value="1"/>
</dbReference>
<dbReference type="PROSITE" id="PS50953">
    <property type="entry name" value="KID"/>
    <property type="match status" value="1"/>
</dbReference>
<gene>
    <name type="primary">Crem</name>
</gene>
<feature type="chain" id="PRO_0000076609" description="cAMP-responsive element modulator">
    <location>
        <begin position="1"/>
        <end position="357"/>
    </location>
</feature>
<feature type="domain" description="KID" evidence="5">
    <location>
        <begin position="101"/>
        <end position="160"/>
    </location>
</feature>
<feature type="domain" description="bZIP" evidence="6">
    <location>
        <begin position="299"/>
        <end position="357"/>
    </location>
</feature>
<feature type="region of interest" description="Basic motif" evidence="6">
    <location>
        <begin position="300"/>
        <end position="325"/>
    </location>
</feature>
<feature type="region of interest" description="Leucine-zipper" evidence="6">
    <location>
        <begin position="327"/>
        <end position="348"/>
    </location>
</feature>
<feature type="modified residue" description="Phosphoserine" evidence="2">
    <location>
        <position position="116"/>
    </location>
</feature>
<feature type="modified residue" description="Phosphoserine" evidence="4">
    <location>
        <position position="142"/>
    </location>
</feature>
<feature type="modified residue" description="Phosphoserine" evidence="4 5">
    <location>
        <position position="284"/>
    </location>
</feature>
<feature type="modified residue" description="Phosphoserine" evidence="4 5">
    <location>
        <position position="287"/>
    </location>
</feature>
<feature type="modified residue" description="Phosphoserine" evidence="4 5">
    <location>
        <position position="290"/>
    </location>
</feature>
<feature type="splice variant" id="VSP_026079" description="In isoform 5." evidence="9">
    <original>MSKCGRKKYMRTNVRQMTMETVESQQDRSVTHSVAEHSSAHMQTGQISVPTLAQ</original>
    <variation>MWWHQHNLCFRHPVEEDYSSGDLDKK</variation>
    <location>
        <begin position="1"/>
        <end position="54"/>
    </location>
</feature>
<feature type="splice variant" id="VSP_026080" description="In isoform 6." evidence="9">
    <original>MSKCGRKKYMRTNVRQMTMETVESQQDRSVTHSVAEHSSAHMQTGQISVPTLAQ</original>
    <variation>M</variation>
    <location>
        <begin position="1"/>
        <end position="54"/>
    </location>
</feature>
<feature type="splice variant" id="VSP_038017" description="In isoform Tau." evidence="10">
    <original>KECRRRKKEYVKCLESRVAVLEVQNKKLIEELETLKDICSPKTD</original>
    <variation>RECRRKKKEYVKCLENRVAVLESQNKTLIEELKALKDLYCHKAE</variation>
    <location>
        <begin position="314"/>
        <end position="357"/>
    </location>
</feature>
<feature type="sequence conflict" description="In Ref. 2; CAA78857." evidence="11" ref="2">
    <original>A</original>
    <variation>L</variation>
    <location>
        <position position="40"/>
    </location>
</feature>
<keyword id="KW-0010">Activator</keyword>
<keyword id="KW-0877">Alternative promoter usage</keyword>
<keyword id="KW-0025">Alternative splicing</keyword>
<keyword id="KW-0238">DNA-binding</keyword>
<keyword id="KW-0539">Nucleus</keyword>
<keyword id="KW-0597">Phosphoprotein</keyword>
<keyword id="KW-1185">Reference proteome</keyword>
<keyword id="KW-0678">Repressor</keyword>
<keyword id="KW-0804">Transcription</keyword>
<keyword id="KW-0805">Transcription regulation</keyword>
<keyword id="KW-0832">Ubl conjugation</keyword>
<accession>Q03061</accession>
<accession>Q6AYV1</accession>
<proteinExistence type="evidence at protein level"/>
<name>CREM_RAT</name>
<protein>
    <recommendedName>
        <fullName>cAMP-responsive element modulator</fullName>
    </recommendedName>
</protein>